<evidence type="ECO:0000250" key="1"/>
<evidence type="ECO:0000250" key="2">
    <source>
        <dbReference type="UniProtKB" id="P60301"/>
    </source>
</evidence>
<evidence type="ECO:0000250" key="3">
    <source>
        <dbReference type="UniProtKB" id="Q9W7K2"/>
    </source>
</evidence>
<evidence type="ECO:0000305" key="4"/>
<organism>
    <name type="scientific">Pseudonaja textilis</name>
    <name type="common">Eastern brown snake</name>
    <dbReference type="NCBI Taxonomy" id="8673"/>
    <lineage>
        <taxon>Eukaryota</taxon>
        <taxon>Metazoa</taxon>
        <taxon>Chordata</taxon>
        <taxon>Craniata</taxon>
        <taxon>Vertebrata</taxon>
        <taxon>Euteleostomi</taxon>
        <taxon>Lepidosauria</taxon>
        <taxon>Squamata</taxon>
        <taxon>Bifurcata</taxon>
        <taxon>Unidentata</taxon>
        <taxon>Episquamata</taxon>
        <taxon>Toxicofera</taxon>
        <taxon>Serpentes</taxon>
        <taxon>Colubroidea</taxon>
        <taxon>Elapidae</taxon>
        <taxon>Hydrophiinae</taxon>
        <taxon>Pseudonaja</taxon>
    </lineage>
</organism>
<name>3S34_PSETE</name>
<feature type="signal peptide" evidence="1">
    <location>
        <begin position="1"/>
        <end position="21"/>
    </location>
</feature>
<feature type="chain" id="PRO_0000035464" description="Short neurotoxin 4">
    <location>
        <begin position="22"/>
        <end position="79"/>
    </location>
</feature>
<feature type="disulfide bond" evidence="2">
    <location>
        <begin position="24"/>
        <end position="41"/>
    </location>
</feature>
<feature type="disulfide bond" evidence="2">
    <location>
        <begin position="34"/>
        <end position="59"/>
    </location>
</feature>
<feature type="disulfide bond" evidence="2">
    <location>
        <begin position="63"/>
        <end position="71"/>
    </location>
</feature>
<accession>Q9W7J9</accession>
<proteinExistence type="inferred from homology"/>
<sequence>MKTLLLTLVMVTIMCLDLGYTLTCYKGYHDTVVCKPHETICYEYFIPATHGNAILARGCGTSCPGGIRPVCCRTDLSNK</sequence>
<comment type="function">
    <text evidence="3">Binds with high affinity to muscle nicotinic acetylcholine receptor (nAChR) and hinders acetylcholine binding to the receptor, thereby impairing neuromuscular transmission. Causes muscle paralysis, spasms and increased respiration.</text>
</comment>
<comment type="subcellular location">
    <subcellularLocation>
        <location evidence="1">Secreted</location>
    </subcellularLocation>
</comment>
<comment type="tissue specificity">
    <text evidence="4">Expressed by the venom gland.</text>
</comment>
<comment type="similarity">
    <text evidence="4">Belongs to the three-finger toxin family. Short-chain subfamily. Type III alpha-neurotoxin sub-subfamily.</text>
</comment>
<dbReference type="EMBL" id="AF082978">
    <property type="protein sequence ID" value="AAD40970.1"/>
    <property type="molecule type" value="mRNA"/>
</dbReference>
<dbReference type="SMR" id="Q9W7J9"/>
<dbReference type="Proteomes" id="UP000472273">
    <property type="component" value="Unplaced"/>
</dbReference>
<dbReference type="GO" id="GO:0005576">
    <property type="term" value="C:extracellular region"/>
    <property type="evidence" value="ECO:0007669"/>
    <property type="project" value="UniProtKB-SubCell"/>
</dbReference>
<dbReference type="GO" id="GO:0030550">
    <property type="term" value="F:acetylcholine receptor inhibitor activity"/>
    <property type="evidence" value="ECO:0007669"/>
    <property type="project" value="UniProtKB-KW"/>
</dbReference>
<dbReference type="GO" id="GO:0099106">
    <property type="term" value="F:ion channel regulator activity"/>
    <property type="evidence" value="ECO:0007669"/>
    <property type="project" value="UniProtKB-KW"/>
</dbReference>
<dbReference type="GO" id="GO:0090729">
    <property type="term" value="F:toxin activity"/>
    <property type="evidence" value="ECO:0007669"/>
    <property type="project" value="UniProtKB-KW"/>
</dbReference>
<dbReference type="CDD" id="cd00206">
    <property type="entry name" value="TFP_snake_toxin"/>
    <property type="match status" value="1"/>
</dbReference>
<dbReference type="Gene3D" id="2.10.60.10">
    <property type="entry name" value="CD59"/>
    <property type="match status" value="1"/>
</dbReference>
<dbReference type="InterPro" id="IPR003571">
    <property type="entry name" value="Snake_3FTx"/>
</dbReference>
<dbReference type="InterPro" id="IPR045860">
    <property type="entry name" value="Snake_toxin-like_sf"/>
</dbReference>
<dbReference type="SUPFAM" id="SSF57302">
    <property type="entry name" value="Snake toxin-like"/>
    <property type="match status" value="1"/>
</dbReference>
<reference key="1">
    <citation type="submission" date="1998-08" db="EMBL/GenBank/DDBJ databases">
        <title>Cloning and expression of cDNAs encoding short neurotoxins in Pseudonaja textilis venom.</title>
        <authorList>
            <person name="Gong N.L."/>
            <person name="Armugam A."/>
            <person name="Jeyaseelan K."/>
        </authorList>
    </citation>
    <scope>NUCLEOTIDE SEQUENCE [MRNA]</scope>
    <source>
        <tissue>Venom gland</tissue>
    </source>
</reference>
<keyword id="KW-0008">Acetylcholine receptor inhibiting toxin</keyword>
<keyword id="KW-1015">Disulfide bond</keyword>
<keyword id="KW-0872">Ion channel impairing toxin</keyword>
<keyword id="KW-0528">Neurotoxin</keyword>
<keyword id="KW-0629">Postsynaptic neurotoxin</keyword>
<keyword id="KW-1185">Reference proteome</keyword>
<keyword id="KW-0964">Secreted</keyword>
<keyword id="KW-0732">Signal</keyword>
<keyword id="KW-0800">Toxin</keyword>
<protein>
    <recommendedName>
        <fullName>Short neurotoxin 4</fullName>
        <shortName>SNTX4</shortName>
    </recommendedName>
    <alternativeName>
        <fullName>Alpha-neurotoxin 4</fullName>
    </alternativeName>
</protein>